<comment type="function">
    <text evidence="1">Catalyzes the dephosphorylation of undecaprenyl diphosphate (UPP). Confers resistance to bacitracin.</text>
</comment>
<comment type="catalytic activity">
    <reaction evidence="1">
        <text>di-trans,octa-cis-undecaprenyl diphosphate + H2O = di-trans,octa-cis-undecaprenyl phosphate + phosphate + H(+)</text>
        <dbReference type="Rhea" id="RHEA:28094"/>
        <dbReference type="ChEBI" id="CHEBI:15377"/>
        <dbReference type="ChEBI" id="CHEBI:15378"/>
        <dbReference type="ChEBI" id="CHEBI:43474"/>
        <dbReference type="ChEBI" id="CHEBI:58405"/>
        <dbReference type="ChEBI" id="CHEBI:60392"/>
        <dbReference type="EC" id="3.6.1.27"/>
    </reaction>
</comment>
<comment type="subcellular location">
    <subcellularLocation>
        <location evidence="1">Cell inner membrane</location>
        <topology evidence="1">Multi-pass membrane protein</topology>
    </subcellularLocation>
</comment>
<comment type="miscellaneous">
    <text>Bacitracin is thought to be involved in the inhibition of peptidoglycan synthesis by sequestering undecaprenyl diphosphate, thereby reducing the pool of lipid carrier available.</text>
</comment>
<comment type="similarity">
    <text evidence="1">Belongs to the UppP family.</text>
</comment>
<sequence length="268" mass="29030">MLSDILRAVILGIVEGVTEFLPVSSTGHLLLAERFFDLGDTNFWKSFTILIQLGAILAILALYFAKLWRIALGMFSDPAAQRFVIGVLVAFLPAAVIGALAGGYIKSYLFNPWVVCFSLIVGGAILLWVDQLDLQPTQDEATAFPLPMYLYIGCAQCLAMIPGVSRSGATIVGAMLLGADKRAAAEFSFFLAIPTMVGAFVYDLYKNRADMTMDHSLIVAIGFAVSFVTAIIVVKSFLAYVTRHGFTLFAWWRVIVGTLGLIALALGK</sequence>
<reference key="1">
    <citation type="submission" date="2006-03" db="EMBL/GenBank/DDBJ databases">
        <title>Complete sequence of Rhodopseudomonas palustris BisB18.</title>
        <authorList>
            <consortium name="US DOE Joint Genome Institute"/>
            <person name="Copeland A."/>
            <person name="Lucas S."/>
            <person name="Lapidus A."/>
            <person name="Barry K."/>
            <person name="Detter J.C."/>
            <person name="Glavina del Rio T."/>
            <person name="Hammon N."/>
            <person name="Israni S."/>
            <person name="Dalin E."/>
            <person name="Tice H."/>
            <person name="Pitluck S."/>
            <person name="Chain P."/>
            <person name="Malfatti S."/>
            <person name="Shin M."/>
            <person name="Vergez L."/>
            <person name="Schmutz J."/>
            <person name="Larimer F."/>
            <person name="Land M."/>
            <person name="Hauser L."/>
            <person name="Pelletier D.A."/>
            <person name="Kyrpides N."/>
            <person name="Anderson I."/>
            <person name="Oda Y."/>
            <person name="Harwood C.S."/>
            <person name="Richardson P."/>
        </authorList>
    </citation>
    <scope>NUCLEOTIDE SEQUENCE [LARGE SCALE GENOMIC DNA]</scope>
    <source>
        <strain>BisB18</strain>
    </source>
</reference>
<name>UPPP_RHOPB</name>
<proteinExistence type="inferred from homology"/>
<keyword id="KW-0046">Antibiotic resistance</keyword>
<keyword id="KW-0997">Cell inner membrane</keyword>
<keyword id="KW-1003">Cell membrane</keyword>
<keyword id="KW-0133">Cell shape</keyword>
<keyword id="KW-0961">Cell wall biogenesis/degradation</keyword>
<keyword id="KW-0378">Hydrolase</keyword>
<keyword id="KW-0472">Membrane</keyword>
<keyword id="KW-0573">Peptidoglycan synthesis</keyword>
<keyword id="KW-0812">Transmembrane</keyword>
<keyword id="KW-1133">Transmembrane helix</keyword>
<protein>
    <recommendedName>
        <fullName evidence="1">Undecaprenyl-diphosphatase</fullName>
        <ecNumber evidence="1">3.6.1.27</ecNumber>
    </recommendedName>
    <alternativeName>
        <fullName evidence="1">Bacitracin resistance protein</fullName>
    </alternativeName>
    <alternativeName>
        <fullName evidence="1">Undecaprenyl pyrophosphate phosphatase</fullName>
    </alternativeName>
</protein>
<accession>Q21C73</accession>
<gene>
    <name evidence="1" type="primary">uppP</name>
    <name type="ordered locus">RPC_0438</name>
</gene>
<evidence type="ECO:0000255" key="1">
    <source>
        <dbReference type="HAMAP-Rule" id="MF_01006"/>
    </source>
</evidence>
<organism>
    <name type="scientific">Rhodopseudomonas palustris (strain BisB18)</name>
    <dbReference type="NCBI Taxonomy" id="316056"/>
    <lineage>
        <taxon>Bacteria</taxon>
        <taxon>Pseudomonadati</taxon>
        <taxon>Pseudomonadota</taxon>
        <taxon>Alphaproteobacteria</taxon>
        <taxon>Hyphomicrobiales</taxon>
        <taxon>Nitrobacteraceae</taxon>
        <taxon>Rhodopseudomonas</taxon>
    </lineage>
</organism>
<dbReference type="EC" id="3.6.1.27" evidence="1"/>
<dbReference type="EMBL" id="CP000301">
    <property type="protein sequence ID" value="ABD86013.1"/>
    <property type="molecule type" value="Genomic_DNA"/>
</dbReference>
<dbReference type="SMR" id="Q21C73"/>
<dbReference type="STRING" id="316056.RPC_0438"/>
<dbReference type="KEGG" id="rpc:RPC_0438"/>
<dbReference type="eggNOG" id="COG1968">
    <property type="taxonomic scope" value="Bacteria"/>
</dbReference>
<dbReference type="HOGENOM" id="CLU_060296_2_0_5"/>
<dbReference type="OrthoDB" id="9808289at2"/>
<dbReference type="GO" id="GO:0005886">
    <property type="term" value="C:plasma membrane"/>
    <property type="evidence" value="ECO:0007669"/>
    <property type="project" value="UniProtKB-SubCell"/>
</dbReference>
<dbReference type="GO" id="GO:0050380">
    <property type="term" value="F:undecaprenyl-diphosphatase activity"/>
    <property type="evidence" value="ECO:0007669"/>
    <property type="project" value="UniProtKB-UniRule"/>
</dbReference>
<dbReference type="GO" id="GO:0071555">
    <property type="term" value="P:cell wall organization"/>
    <property type="evidence" value="ECO:0007669"/>
    <property type="project" value="UniProtKB-KW"/>
</dbReference>
<dbReference type="GO" id="GO:0009252">
    <property type="term" value="P:peptidoglycan biosynthetic process"/>
    <property type="evidence" value="ECO:0007669"/>
    <property type="project" value="UniProtKB-KW"/>
</dbReference>
<dbReference type="GO" id="GO:0008360">
    <property type="term" value="P:regulation of cell shape"/>
    <property type="evidence" value="ECO:0007669"/>
    <property type="project" value="UniProtKB-KW"/>
</dbReference>
<dbReference type="GO" id="GO:0046677">
    <property type="term" value="P:response to antibiotic"/>
    <property type="evidence" value="ECO:0007669"/>
    <property type="project" value="UniProtKB-UniRule"/>
</dbReference>
<dbReference type="HAMAP" id="MF_01006">
    <property type="entry name" value="Undec_diphosphatase"/>
    <property type="match status" value="1"/>
</dbReference>
<dbReference type="InterPro" id="IPR003824">
    <property type="entry name" value="UppP"/>
</dbReference>
<dbReference type="NCBIfam" id="NF001389">
    <property type="entry name" value="PRK00281.1-2"/>
    <property type="match status" value="1"/>
</dbReference>
<dbReference type="NCBIfam" id="NF001390">
    <property type="entry name" value="PRK00281.1-4"/>
    <property type="match status" value="1"/>
</dbReference>
<dbReference type="NCBIfam" id="TIGR00753">
    <property type="entry name" value="undec_PP_bacA"/>
    <property type="match status" value="1"/>
</dbReference>
<dbReference type="PANTHER" id="PTHR30622">
    <property type="entry name" value="UNDECAPRENYL-DIPHOSPHATASE"/>
    <property type="match status" value="1"/>
</dbReference>
<dbReference type="PANTHER" id="PTHR30622:SF3">
    <property type="entry name" value="UNDECAPRENYL-DIPHOSPHATASE"/>
    <property type="match status" value="1"/>
</dbReference>
<dbReference type="Pfam" id="PF02673">
    <property type="entry name" value="BacA"/>
    <property type="match status" value="1"/>
</dbReference>
<feature type="chain" id="PRO_0000250256" description="Undecaprenyl-diphosphatase">
    <location>
        <begin position="1"/>
        <end position="268"/>
    </location>
</feature>
<feature type="transmembrane region" description="Helical" evidence="1">
    <location>
        <begin position="47"/>
        <end position="67"/>
    </location>
</feature>
<feature type="transmembrane region" description="Helical" evidence="1">
    <location>
        <begin position="83"/>
        <end position="103"/>
    </location>
</feature>
<feature type="transmembrane region" description="Helical" evidence="1">
    <location>
        <begin position="109"/>
        <end position="129"/>
    </location>
</feature>
<feature type="transmembrane region" description="Helical" evidence="1">
    <location>
        <begin position="144"/>
        <end position="164"/>
    </location>
</feature>
<feature type="transmembrane region" description="Helical" evidence="1">
    <location>
        <begin position="184"/>
        <end position="204"/>
    </location>
</feature>
<feature type="transmembrane region" description="Helical" evidence="1">
    <location>
        <begin position="217"/>
        <end position="237"/>
    </location>
</feature>
<feature type="transmembrane region" description="Helical" evidence="1">
    <location>
        <begin position="246"/>
        <end position="266"/>
    </location>
</feature>